<accession>A4QA22</accession>
<gene>
    <name evidence="1" type="primary">ureB</name>
    <name type="ordered locus">cgR_0104</name>
</gene>
<dbReference type="EC" id="3.5.1.5" evidence="1"/>
<dbReference type="EMBL" id="AP009044">
    <property type="protein sequence ID" value="BAF53065.1"/>
    <property type="molecule type" value="Genomic_DNA"/>
</dbReference>
<dbReference type="RefSeq" id="WP_003857707.1">
    <property type="nucleotide sequence ID" value="NC_009342.1"/>
</dbReference>
<dbReference type="SMR" id="A4QA22"/>
<dbReference type="KEGG" id="cgt:cgR_0104"/>
<dbReference type="HOGENOM" id="CLU_129707_1_0_11"/>
<dbReference type="PhylomeDB" id="A4QA22"/>
<dbReference type="UniPathway" id="UPA00258">
    <property type="reaction ID" value="UER00370"/>
</dbReference>
<dbReference type="Proteomes" id="UP000006698">
    <property type="component" value="Chromosome"/>
</dbReference>
<dbReference type="GO" id="GO:0035550">
    <property type="term" value="C:urease complex"/>
    <property type="evidence" value="ECO:0007669"/>
    <property type="project" value="InterPro"/>
</dbReference>
<dbReference type="GO" id="GO:0009039">
    <property type="term" value="F:urease activity"/>
    <property type="evidence" value="ECO:0007669"/>
    <property type="project" value="UniProtKB-UniRule"/>
</dbReference>
<dbReference type="GO" id="GO:0043419">
    <property type="term" value="P:urea catabolic process"/>
    <property type="evidence" value="ECO:0007669"/>
    <property type="project" value="UniProtKB-UniRule"/>
</dbReference>
<dbReference type="CDD" id="cd00407">
    <property type="entry name" value="Urease_beta"/>
    <property type="match status" value="1"/>
</dbReference>
<dbReference type="Gene3D" id="2.10.150.10">
    <property type="entry name" value="Urease, beta subunit"/>
    <property type="match status" value="1"/>
</dbReference>
<dbReference type="HAMAP" id="MF_01954">
    <property type="entry name" value="Urease_beta"/>
    <property type="match status" value="1"/>
</dbReference>
<dbReference type="InterPro" id="IPR002019">
    <property type="entry name" value="Urease_beta-like"/>
</dbReference>
<dbReference type="InterPro" id="IPR036461">
    <property type="entry name" value="Urease_betasu_sf"/>
</dbReference>
<dbReference type="InterPro" id="IPR050069">
    <property type="entry name" value="Urease_subunit"/>
</dbReference>
<dbReference type="NCBIfam" id="NF009682">
    <property type="entry name" value="PRK13203.1"/>
    <property type="match status" value="1"/>
</dbReference>
<dbReference type="NCBIfam" id="TIGR00192">
    <property type="entry name" value="urease_beta"/>
    <property type="match status" value="1"/>
</dbReference>
<dbReference type="PANTHER" id="PTHR33569">
    <property type="entry name" value="UREASE"/>
    <property type="match status" value="1"/>
</dbReference>
<dbReference type="PANTHER" id="PTHR33569:SF1">
    <property type="entry name" value="UREASE"/>
    <property type="match status" value="1"/>
</dbReference>
<dbReference type="Pfam" id="PF00699">
    <property type="entry name" value="Urease_beta"/>
    <property type="match status" value="1"/>
</dbReference>
<dbReference type="SUPFAM" id="SSF51278">
    <property type="entry name" value="Urease, beta-subunit"/>
    <property type="match status" value="1"/>
</dbReference>
<proteinExistence type="inferred from homology"/>
<keyword id="KW-0963">Cytoplasm</keyword>
<keyword id="KW-0378">Hydrolase</keyword>
<comment type="catalytic activity">
    <reaction evidence="1">
        <text>urea + 2 H2O + H(+) = hydrogencarbonate + 2 NH4(+)</text>
        <dbReference type="Rhea" id="RHEA:20557"/>
        <dbReference type="ChEBI" id="CHEBI:15377"/>
        <dbReference type="ChEBI" id="CHEBI:15378"/>
        <dbReference type="ChEBI" id="CHEBI:16199"/>
        <dbReference type="ChEBI" id="CHEBI:17544"/>
        <dbReference type="ChEBI" id="CHEBI:28938"/>
        <dbReference type="EC" id="3.5.1.5"/>
    </reaction>
</comment>
<comment type="pathway">
    <text evidence="1">Nitrogen metabolism; urea degradation; CO(2) and NH(3) from urea (urease route): step 1/1.</text>
</comment>
<comment type="subunit">
    <text evidence="1">Heterotrimer of UreA (gamma), UreB (beta) and UreC (alpha) subunits. Three heterotrimers associate to form the active enzyme.</text>
</comment>
<comment type="subcellular location">
    <subcellularLocation>
        <location evidence="1">Cytoplasm</location>
    </subcellularLocation>
</comment>
<comment type="similarity">
    <text evidence="1">Belongs to the urease beta subunit family.</text>
</comment>
<sequence length="158" mass="17163">MIPGEYILSSESLTGNVGREAKTIEIINTGDRPVQIGSHFHFAEVNPSISFDRSEGYGFRLDIPSGTAVRLEPGDARTVNLVAIGGDRIVAGFRDLVDGPLEDLKVNVWEGREDDWRRSSAAGDAPQELPQVEAAERGRKLDEATDVGTEDTPEEGQN</sequence>
<name>URE2_CORGB</name>
<evidence type="ECO:0000255" key="1">
    <source>
        <dbReference type="HAMAP-Rule" id="MF_01954"/>
    </source>
</evidence>
<evidence type="ECO:0000256" key="2">
    <source>
        <dbReference type="SAM" id="MobiDB-lite"/>
    </source>
</evidence>
<reference key="1">
    <citation type="journal article" date="2007" name="Microbiology">
        <title>Comparative analysis of the Corynebacterium glutamicum group and complete genome sequence of strain R.</title>
        <authorList>
            <person name="Yukawa H."/>
            <person name="Omumasaba C.A."/>
            <person name="Nonaka H."/>
            <person name="Kos P."/>
            <person name="Okai N."/>
            <person name="Suzuki N."/>
            <person name="Suda M."/>
            <person name="Tsuge Y."/>
            <person name="Watanabe J."/>
            <person name="Ikeda Y."/>
            <person name="Vertes A.A."/>
            <person name="Inui M."/>
        </authorList>
    </citation>
    <scope>NUCLEOTIDE SEQUENCE [LARGE SCALE GENOMIC DNA]</scope>
    <source>
        <strain>R</strain>
    </source>
</reference>
<feature type="chain" id="PRO_1000070732" description="Urease subunit beta">
    <location>
        <begin position="1"/>
        <end position="158"/>
    </location>
</feature>
<feature type="region of interest" description="Disordered" evidence="2">
    <location>
        <begin position="113"/>
        <end position="158"/>
    </location>
</feature>
<feature type="compositionally biased region" description="Basic and acidic residues" evidence="2">
    <location>
        <begin position="134"/>
        <end position="143"/>
    </location>
</feature>
<feature type="compositionally biased region" description="Acidic residues" evidence="2">
    <location>
        <begin position="144"/>
        <end position="158"/>
    </location>
</feature>
<organism>
    <name type="scientific">Corynebacterium glutamicum (strain R)</name>
    <dbReference type="NCBI Taxonomy" id="340322"/>
    <lineage>
        <taxon>Bacteria</taxon>
        <taxon>Bacillati</taxon>
        <taxon>Actinomycetota</taxon>
        <taxon>Actinomycetes</taxon>
        <taxon>Mycobacteriales</taxon>
        <taxon>Corynebacteriaceae</taxon>
        <taxon>Corynebacterium</taxon>
    </lineage>
</organism>
<protein>
    <recommendedName>
        <fullName evidence="1">Urease subunit beta</fullName>
        <ecNumber evidence="1">3.5.1.5</ecNumber>
    </recommendedName>
    <alternativeName>
        <fullName evidence="1">Urea amidohydrolase subunit beta</fullName>
    </alternativeName>
</protein>